<dbReference type="EMBL" id="U38804">
    <property type="protein sequence ID" value="AAC08156.1"/>
    <property type="molecule type" value="Genomic_DNA"/>
</dbReference>
<dbReference type="PIR" id="S73191">
    <property type="entry name" value="S73191"/>
</dbReference>
<dbReference type="RefSeq" id="NP_053880.1">
    <property type="nucleotide sequence ID" value="NC_000925.1"/>
</dbReference>
<dbReference type="SMR" id="P51270"/>
<dbReference type="GeneID" id="809899"/>
<dbReference type="GO" id="GO:0009507">
    <property type="term" value="C:chloroplast"/>
    <property type="evidence" value="ECO:0007669"/>
    <property type="project" value="UniProtKB-SubCell"/>
</dbReference>
<dbReference type="GO" id="GO:0015934">
    <property type="term" value="C:large ribosomal subunit"/>
    <property type="evidence" value="ECO:0007669"/>
    <property type="project" value="TreeGrafter"/>
</dbReference>
<dbReference type="GO" id="GO:0003735">
    <property type="term" value="F:structural constituent of ribosome"/>
    <property type="evidence" value="ECO:0007669"/>
    <property type="project" value="InterPro"/>
</dbReference>
<dbReference type="GO" id="GO:0006412">
    <property type="term" value="P:translation"/>
    <property type="evidence" value="ECO:0007669"/>
    <property type="project" value="UniProtKB-UniRule"/>
</dbReference>
<dbReference type="FunFam" id="4.10.410.60:FF:000001">
    <property type="entry name" value="50S ribosomal protein L35"/>
    <property type="match status" value="1"/>
</dbReference>
<dbReference type="Gene3D" id="4.10.410.60">
    <property type="match status" value="1"/>
</dbReference>
<dbReference type="HAMAP" id="MF_00514">
    <property type="entry name" value="Ribosomal_bL35"/>
    <property type="match status" value="1"/>
</dbReference>
<dbReference type="InterPro" id="IPR001706">
    <property type="entry name" value="Ribosomal_bL35"/>
</dbReference>
<dbReference type="InterPro" id="IPR021137">
    <property type="entry name" value="Ribosomal_bL35-like"/>
</dbReference>
<dbReference type="InterPro" id="IPR018265">
    <property type="entry name" value="Ribosomal_bL35_CS"/>
</dbReference>
<dbReference type="InterPro" id="IPR037229">
    <property type="entry name" value="Ribosomal_bL35_sf"/>
</dbReference>
<dbReference type="NCBIfam" id="TIGR00001">
    <property type="entry name" value="rpmI_bact"/>
    <property type="match status" value="1"/>
</dbReference>
<dbReference type="PANTHER" id="PTHR33343">
    <property type="entry name" value="54S RIBOSOMAL PROTEIN BL35M"/>
    <property type="match status" value="1"/>
</dbReference>
<dbReference type="PANTHER" id="PTHR33343:SF1">
    <property type="entry name" value="LARGE RIBOSOMAL SUBUNIT PROTEIN BL35M"/>
    <property type="match status" value="1"/>
</dbReference>
<dbReference type="Pfam" id="PF01632">
    <property type="entry name" value="Ribosomal_L35p"/>
    <property type="match status" value="1"/>
</dbReference>
<dbReference type="PRINTS" id="PR00064">
    <property type="entry name" value="RIBOSOMALL35"/>
</dbReference>
<dbReference type="SUPFAM" id="SSF143034">
    <property type="entry name" value="L35p-like"/>
    <property type="match status" value="1"/>
</dbReference>
<dbReference type="PROSITE" id="PS00936">
    <property type="entry name" value="RIBOSOMAL_L35"/>
    <property type="match status" value="1"/>
</dbReference>
<gene>
    <name evidence="1" type="primary">rpl35</name>
</gene>
<evidence type="ECO:0000255" key="1">
    <source>
        <dbReference type="HAMAP-Rule" id="MF_00514"/>
    </source>
</evidence>
<evidence type="ECO:0000256" key="2">
    <source>
        <dbReference type="SAM" id="MobiDB-lite"/>
    </source>
</evidence>
<evidence type="ECO:0000305" key="3"/>
<accession>P51270</accession>
<sequence>MPKLKTSKAIAKRFKVSSSGKILRHKASKSHLLQKKSSKHRRHLSSTCQVDSRDAKNISINLPYL</sequence>
<proteinExistence type="inferred from homology"/>
<reference key="1">
    <citation type="journal article" date="1995" name="Plant Mol. Biol. Rep.">
        <title>Complete nucleotide sequence of the Porphyra purpurea chloroplast genome.</title>
        <authorList>
            <person name="Reith M.E."/>
            <person name="Munholland J."/>
        </authorList>
    </citation>
    <scope>NUCLEOTIDE SEQUENCE [LARGE SCALE GENOMIC DNA]</scope>
    <source>
        <strain>Avonport</strain>
    </source>
</reference>
<organism>
    <name type="scientific">Porphyra purpurea</name>
    <name type="common">Red seaweed</name>
    <name type="synonym">Ulva purpurea</name>
    <dbReference type="NCBI Taxonomy" id="2787"/>
    <lineage>
        <taxon>Eukaryota</taxon>
        <taxon>Rhodophyta</taxon>
        <taxon>Bangiophyceae</taxon>
        <taxon>Bangiales</taxon>
        <taxon>Bangiaceae</taxon>
        <taxon>Porphyra</taxon>
    </lineage>
</organism>
<keyword id="KW-0150">Chloroplast</keyword>
<keyword id="KW-0934">Plastid</keyword>
<keyword id="KW-0687">Ribonucleoprotein</keyword>
<keyword id="KW-0689">Ribosomal protein</keyword>
<protein>
    <recommendedName>
        <fullName evidence="1">Large ribosomal subunit protein bL35c</fullName>
    </recommendedName>
    <alternativeName>
        <fullName evidence="3">50S ribosomal protein L35, chloroplastic</fullName>
    </alternativeName>
</protein>
<comment type="subcellular location">
    <subcellularLocation>
        <location>Plastid</location>
        <location>Chloroplast</location>
    </subcellularLocation>
</comment>
<comment type="similarity">
    <text evidence="1">Belongs to the bacterial ribosomal protein bL35 family.</text>
</comment>
<geneLocation type="chloroplast"/>
<feature type="chain" id="PRO_0000177469" description="Large ribosomal subunit protein bL35c">
    <location>
        <begin position="1"/>
        <end position="65"/>
    </location>
</feature>
<feature type="region of interest" description="Disordered" evidence="2">
    <location>
        <begin position="18"/>
        <end position="50"/>
    </location>
</feature>
<feature type="compositionally biased region" description="Basic residues" evidence="2">
    <location>
        <begin position="22"/>
        <end position="44"/>
    </location>
</feature>
<name>RK35_PORPU</name>